<organism>
    <name type="scientific">Beijerinckia indica subsp. indica (strain ATCC 9039 / DSM 1715 / NCIMB 8712)</name>
    <dbReference type="NCBI Taxonomy" id="395963"/>
    <lineage>
        <taxon>Bacteria</taxon>
        <taxon>Pseudomonadati</taxon>
        <taxon>Pseudomonadota</taxon>
        <taxon>Alphaproteobacteria</taxon>
        <taxon>Hyphomicrobiales</taxon>
        <taxon>Beijerinckiaceae</taxon>
        <taxon>Beijerinckia</taxon>
    </lineage>
</organism>
<keyword id="KW-1185">Reference proteome</keyword>
<feature type="chain" id="PRO_1000133781" description="Protein ApaG">
    <location>
        <begin position="1"/>
        <end position="130"/>
    </location>
</feature>
<feature type="domain" description="ApaG" evidence="1">
    <location>
        <begin position="3"/>
        <end position="127"/>
    </location>
</feature>
<sequence length="130" mass="14413">MYSTITRDIQITVLTEFVPERSDADESSFFWAYTVEIANQSDLTVQLTGRHWKITDANGKLEEVQGPGIVGEQPVLKPGETFRYTSGCPLTTPSGIMTGSYRMVTEKGDVFEAAIPVFSLDSPFSRQVLN</sequence>
<evidence type="ECO:0000255" key="1">
    <source>
        <dbReference type="HAMAP-Rule" id="MF_00791"/>
    </source>
</evidence>
<name>APAG_BEII9</name>
<proteinExistence type="inferred from homology"/>
<protein>
    <recommendedName>
        <fullName evidence="1">Protein ApaG</fullName>
    </recommendedName>
</protein>
<gene>
    <name evidence="1" type="primary">apaG</name>
    <name type="ordered locus">Bind_1039</name>
</gene>
<accession>B2III9</accession>
<reference key="1">
    <citation type="journal article" date="2010" name="J. Bacteriol.">
        <title>Complete genome sequence of Beijerinckia indica subsp. indica.</title>
        <authorList>
            <person name="Tamas I."/>
            <person name="Dedysh S.N."/>
            <person name="Liesack W."/>
            <person name="Stott M.B."/>
            <person name="Alam M."/>
            <person name="Murrell J.C."/>
            <person name="Dunfield P.F."/>
        </authorList>
    </citation>
    <scope>NUCLEOTIDE SEQUENCE [LARGE SCALE GENOMIC DNA]</scope>
    <source>
        <strain>ATCC 9039 / DSM 1715 / NCIMB 8712</strain>
    </source>
</reference>
<dbReference type="EMBL" id="CP001016">
    <property type="protein sequence ID" value="ACB94682.1"/>
    <property type="molecule type" value="Genomic_DNA"/>
</dbReference>
<dbReference type="RefSeq" id="WP_012384039.1">
    <property type="nucleotide sequence ID" value="NC_010581.1"/>
</dbReference>
<dbReference type="SMR" id="B2III9"/>
<dbReference type="STRING" id="395963.Bind_1039"/>
<dbReference type="KEGG" id="bid:Bind_1039"/>
<dbReference type="eggNOG" id="COG2967">
    <property type="taxonomic scope" value="Bacteria"/>
</dbReference>
<dbReference type="HOGENOM" id="CLU_128074_1_0_5"/>
<dbReference type="OrthoDB" id="9795226at2"/>
<dbReference type="Proteomes" id="UP000001695">
    <property type="component" value="Chromosome"/>
</dbReference>
<dbReference type="GO" id="GO:0070987">
    <property type="term" value="P:error-free translesion synthesis"/>
    <property type="evidence" value="ECO:0007669"/>
    <property type="project" value="TreeGrafter"/>
</dbReference>
<dbReference type="Gene3D" id="2.60.40.1470">
    <property type="entry name" value="ApaG domain"/>
    <property type="match status" value="1"/>
</dbReference>
<dbReference type="HAMAP" id="MF_00791">
    <property type="entry name" value="ApaG"/>
    <property type="match status" value="1"/>
</dbReference>
<dbReference type="InterPro" id="IPR007474">
    <property type="entry name" value="ApaG_domain"/>
</dbReference>
<dbReference type="InterPro" id="IPR036767">
    <property type="entry name" value="ApaG_sf"/>
</dbReference>
<dbReference type="InterPro" id="IPR023065">
    <property type="entry name" value="Uncharacterised_ApaG"/>
</dbReference>
<dbReference type="NCBIfam" id="NF003967">
    <property type="entry name" value="PRK05461.1"/>
    <property type="match status" value="1"/>
</dbReference>
<dbReference type="PANTHER" id="PTHR14289">
    <property type="entry name" value="F-BOX ONLY PROTEIN 3"/>
    <property type="match status" value="1"/>
</dbReference>
<dbReference type="PANTHER" id="PTHR14289:SF16">
    <property type="entry name" value="POLYMERASE DELTA-INTERACTING PROTEIN 2"/>
    <property type="match status" value="1"/>
</dbReference>
<dbReference type="Pfam" id="PF04379">
    <property type="entry name" value="DUF525"/>
    <property type="match status" value="1"/>
</dbReference>
<dbReference type="SUPFAM" id="SSF110069">
    <property type="entry name" value="ApaG-like"/>
    <property type="match status" value="1"/>
</dbReference>
<dbReference type="PROSITE" id="PS51087">
    <property type="entry name" value="APAG"/>
    <property type="match status" value="1"/>
</dbReference>